<organism>
    <name type="scientific">Oryctolagus cuniculus</name>
    <name type="common">Rabbit</name>
    <dbReference type="NCBI Taxonomy" id="9986"/>
    <lineage>
        <taxon>Eukaryota</taxon>
        <taxon>Metazoa</taxon>
        <taxon>Chordata</taxon>
        <taxon>Craniata</taxon>
        <taxon>Vertebrata</taxon>
        <taxon>Euteleostomi</taxon>
        <taxon>Mammalia</taxon>
        <taxon>Eutheria</taxon>
        <taxon>Euarchontoglires</taxon>
        <taxon>Glires</taxon>
        <taxon>Lagomorpha</taxon>
        <taxon>Leporidae</taxon>
        <taxon>Oryctolagus</taxon>
    </lineage>
</organism>
<dbReference type="PIR" id="S36843">
    <property type="entry name" value="S36843"/>
</dbReference>
<dbReference type="SMR" id="P80223"/>
<dbReference type="InParanoid" id="P80223"/>
<dbReference type="Proteomes" id="UP000001811">
    <property type="component" value="Unplaced"/>
</dbReference>
<dbReference type="GO" id="GO:0005576">
    <property type="term" value="C:extracellular region"/>
    <property type="evidence" value="ECO:0007669"/>
    <property type="project" value="UniProtKB-SubCell"/>
</dbReference>
<dbReference type="GO" id="GO:0042742">
    <property type="term" value="P:defense response to bacterium"/>
    <property type="evidence" value="ECO:0007669"/>
    <property type="project" value="UniProtKB-KW"/>
</dbReference>
<dbReference type="InterPro" id="IPR006081">
    <property type="entry name" value="Alpha-defensin_C"/>
</dbReference>
<dbReference type="InterPro" id="IPR006080">
    <property type="entry name" value="Beta/alpha-defensin_C"/>
</dbReference>
<dbReference type="Pfam" id="PF00323">
    <property type="entry name" value="Defensin_1"/>
    <property type="match status" value="1"/>
</dbReference>
<dbReference type="SMART" id="SM00048">
    <property type="entry name" value="DEFSN"/>
    <property type="match status" value="1"/>
</dbReference>
<dbReference type="SUPFAM" id="SSF57392">
    <property type="entry name" value="Defensin-like"/>
    <property type="match status" value="1"/>
</dbReference>
<dbReference type="PROSITE" id="PS00269">
    <property type="entry name" value="DEFENSIN"/>
    <property type="match status" value="1"/>
</dbReference>
<name>DEF7_RABIT</name>
<comment type="function">
    <text>Microbicidal activity and inhibits corticotropin (ACTH) stimulated corticosterone production.</text>
</comment>
<comment type="subcellular location">
    <subcellularLocation>
        <location>Secreted</location>
    </subcellularLocation>
</comment>
<comment type="tissue specificity">
    <text>Lung, spleen, small intestine, pituitary gland, adrenal medulla and plasma.</text>
</comment>
<comment type="similarity">
    <text evidence="2">Belongs to the alpha-defensin family.</text>
</comment>
<proteinExistence type="evidence at protein level"/>
<evidence type="ECO:0000250" key="1"/>
<evidence type="ECO:0000305" key="2"/>
<reference key="1">
    <citation type="journal article" date="1993" name="Eur. J. Biochem.">
        <title>Purification and characterization of new anti-adrenocorticotropin rabbit neutrophil peptides (defensins).</title>
        <authorList>
            <person name="Fuse N."/>
            <person name="Hayashi Y."/>
            <person name="Fukata J."/>
            <person name="Tominaga T."/>
            <person name="Ebisui O."/>
            <person name="Satoh Y."/>
            <person name="Isohara T."/>
            <person name="Uno I."/>
            <person name="Imura H."/>
        </authorList>
    </citation>
    <scope>PROTEIN SEQUENCE</scope>
    <source>
        <strain>Japanese white</strain>
        <tissue>Spleen</tissue>
    </source>
</reference>
<accession>P80223</accession>
<accession>P80224</accession>
<sequence>GICACRRRFCLNFEQFSGYCRVNGARYVRCCSRR</sequence>
<keyword id="KW-0044">Antibiotic</keyword>
<keyword id="KW-0929">Antimicrobial</keyword>
<keyword id="KW-0211">Defensin</keyword>
<keyword id="KW-0903">Direct protein sequencing</keyword>
<keyword id="KW-1015">Disulfide bond</keyword>
<keyword id="KW-1185">Reference proteome</keyword>
<keyword id="KW-0964">Secreted</keyword>
<feature type="peptide" id="PRO_0000044719" description="Corticostatin-6">
    <location>
        <begin position="1"/>
        <end position="34"/>
    </location>
</feature>
<feature type="disulfide bond" evidence="1">
    <location>
        <begin position="3"/>
        <end position="31"/>
    </location>
</feature>
<feature type="disulfide bond" evidence="1">
    <location>
        <begin position="5"/>
        <end position="20"/>
    </location>
</feature>
<feature type="disulfide bond" evidence="1">
    <location>
        <begin position="10"/>
        <end position="30"/>
    </location>
</feature>
<protein>
    <recommendedName>
        <fullName>Corticostatin-6</fullName>
    </recommendedName>
    <alternativeName>
        <fullName>Corticostatin VI</fullName>
        <shortName>CS-VI</shortName>
    </alternativeName>
    <alternativeName>
        <fullName>Neutrophil antibiotic peptide NP-6</fullName>
    </alternativeName>
</protein>